<proteinExistence type="inferred from homology"/>
<protein>
    <recommendedName>
        <fullName evidence="1">Glycerol kinase</fullName>
        <ecNumber evidence="1">2.7.1.30</ecNumber>
    </recommendedName>
    <alternativeName>
        <fullName evidence="1">ATP:glycerol 3-phosphotransferase</fullName>
    </alternativeName>
    <alternativeName>
        <fullName evidence="1">Glycerokinase</fullName>
        <shortName evidence="1">GK</shortName>
    </alternativeName>
</protein>
<name>GLPK_CHLSY</name>
<keyword id="KW-0067">ATP-binding</keyword>
<keyword id="KW-0319">Glycerol metabolism</keyword>
<keyword id="KW-0418">Kinase</keyword>
<keyword id="KW-0547">Nucleotide-binding</keyword>
<keyword id="KW-0808">Transferase</keyword>
<evidence type="ECO:0000255" key="1">
    <source>
        <dbReference type="HAMAP-Rule" id="MF_00186"/>
    </source>
</evidence>
<sequence>MAKYAAAIDQGTTSTRCMIFDHSGNVICYDQKEHEQIYPRPGWVEHSPDEIWERTQSVIRGALSKGGLSASDIVAVGITNQRETTVVWNRKTGRPVYNAIVWQDTRTDQICNELAADGGQDRFRPKVGLPLATYFSGPKIRWILDNVPGAREAAEAGDVVFGNIDTFLTWWLTGGPNGGVHVTDVTNASRTMLMNLETLDWDDEILGIMGIPRQMLPKIVPSSMVYGTATGELAGVPVAGILGDQQAAMVGQTCFDVGEAKNTYGTGSFMLLNTGTKLVPSKSGLLTTVCYKFGDQPAVYALEGSIAITGALVQWLRDNLGLITSSAEVEALANLVEDNGGIYFVPAFSGLFAPYWRSDARGVIVGLTRYVNKGHLARAVLEATAYQTREVLDAMEQDSGVKLTALKVDGGMVYNNTLMQFQADILGVPVIRPKVAETTSLGAAYAAGLAVGFWSNTDEMRANWGVDHTWTPQMDEATRERLYRGWKKAVTRTFDWVE</sequence>
<feature type="chain" id="PRO_1000124186" description="Glycerol kinase">
    <location>
        <begin position="1"/>
        <end position="498"/>
    </location>
</feature>
<feature type="binding site" evidence="1">
    <location>
        <position position="12"/>
    </location>
    <ligand>
        <name>ADP</name>
        <dbReference type="ChEBI" id="CHEBI:456216"/>
    </ligand>
</feature>
<feature type="binding site" evidence="1">
    <location>
        <position position="12"/>
    </location>
    <ligand>
        <name>ATP</name>
        <dbReference type="ChEBI" id="CHEBI:30616"/>
    </ligand>
</feature>
<feature type="binding site" evidence="1">
    <location>
        <position position="12"/>
    </location>
    <ligand>
        <name>sn-glycerol 3-phosphate</name>
        <dbReference type="ChEBI" id="CHEBI:57597"/>
    </ligand>
</feature>
<feature type="binding site" evidence="1">
    <location>
        <position position="13"/>
    </location>
    <ligand>
        <name>ATP</name>
        <dbReference type="ChEBI" id="CHEBI:30616"/>
    </ligand>
</feature>
<feature type="binding site" evidence="1">
    <location>
        <position position="14"/>
    </location>
    <ligand>
        <name>ATP</name>
        <dbReference type="ChEBI" id="CHEBI:30616"/>
    </ligand>
</feature>
<feature type="binding site" evidence="1">
    <location>
        <position position="16"/>
    </location>
    <ligand>
        <name>ADP</name>
        <dbReference type="ChEBI" id="CHEBI:456216"/>
    </ligand>
</feature>
<feature type="binding site" evidence="1">
    <location>
        <position position="82"/>
    </location>
    <ligand>
        <name>glycerol</name>
        <dbReference type="ChEBI" id="CHEBI:17754"/>
    </ligand>
</feature>
<feature type="binding site" evidence="1">
    <location>
        <position position="82"/>
    </location>
    <ligand>
        <name>sn-glycerol 3-phosphate</name>
        <dbReference type="ChEBI" id="CHEBI:57597"/>
    </ligand>
</feature>
<feature type="binding site" evidence="1">
    <location>
        <position position="83"/>
    </location>
    <ligand>
        <name>glycerol</name>
        <dbReference type="ChEBI" id="CHEBI:17754"/>
    </ligand>
</feature>
<feature type="binding site" evidence="1">
    <location>
        <position position="83"/>
    </location>
    <ligand>
        <name>sn-glycerol 3-phosphate</name>
        <dbReference type="ChEBI" id="CHEBI:57597"/>
    </ligand>
</feature>
<feature type="binding site" evidence="1">
    <location>
        <position position="134"/>
    </location>
    <ligand>
        <name>glycerol</name>
        <dbReference type="ChEBI" id="CHEBI:17754"/>
    </ligand>
</feature>
<feature type="binding site" evidence="1">
    <location>
        <position position="134"/>
    </location>
    <ligand>
        <name>sn-glycerol 3-phosphate</name>
        <dbReference type="ChEBI" id="CHEBI:57597"/>
    </ligand>
</feature>
<feature type="binding site" evidence="1">
    <location>
        <position position="244"/>
    </location>
    <ligand>
        <name>glycerol</name>
        <dbReference type="ChEBI" id="CHEBI:17754"/>
    </ligand>
</feature>
<feature type="binding site" evidence="1">
    <location>
        <position position="244"/>
    </location>
    <ligand>
        <name>sn-glycerol 3-phosphate</name>
        <dbReference type="ChEBI" id="CHEBI:57597"/>
    </ligand>
</feature>
<feature type="binding site" evidence="1">
    <location>
        <position position="245"/>
    </location>
    <ligand>
        <name>glycerol</name>
        <dbReference type="ChEBI" id="CHEBI:17754"/>
    </ligand>
</feature>
<feature type="binding site" evidence="1">
    <location>
        <position position="266"/>
    </location>
    <ligand>
        <name>ADP</name>
        <dbReference type="ChEBI" id="CHEBI:456216"/>
    </ligand>
</feature>
<feature type="binding site" evidence="1">
    <location>
        <position position="266"/>
    </location>
    <ligand>
        <name>ATP</name>
        <dbReference type="ChEBI" id="CHEBI:30616"/>
    </ligand>
</feature>
<feature type="binding site" evidence="1">
    <location>
        <position position="310"/>
    </location>
    <ligand>
        <name>ADP</name>
        <dbReference type="ChEBI" id="CHEBI:456216"/>
    </ligand>
</feature>
<feature type="binding site" evidence="1">
    <location>
        <position position="310"/>
    </location>
    <ligand>
        <name>ATP</name>
        <dbReference type="ChEBI" id="CHEBI:30616"/>
    </ligand>
</feature>
<feature type="binding site" evidence="1">
    <location>
        <position position="314"/>
    </location>
    <ligand>
        <name>ATP</name>
        <dbReference type="ChEBI" id="CHEBI:30616"/>
    </ligand>
</feature>
<feature type="binding site" evidence="1">
    <location>
        <position position="411"/>
    </location>
    <ligand>
        <name>ADP</name>
        <dbReference type="ChEBI" id="CHEBI:456216"/>
    </ligand>
</feature>
<feature type="binding site" evidence="1">
    <location>
        <position position="411"/>
    </location>
    <ligand>
        <name>ATP</name>
        <dbReference type="ChEBI" id="CHEBI:30616"/>
    </ligand>
</feature>
<feature type="binding site" evidence="1">
    <location>
        <position position="415"/>
    </location>
    <ligand>
        <name>ADP</name>
        <dbReference type="ChEBI" id="CHEBI:456216"/>
    </ligand>
</feature>
<comment type="function">
    <text evidence="1">Key enzyme in the regulation of glycerol uptake and metabolism. Catalyzes the phosphorylation of glycerol to yield sn-glycerol 3-phosphate.</text>
</comment>
<comment type="catalytic activity">
    <reaction evidence="1">
        <text>glycerol + ATP = sn-glycerol 3-phosphate + ADP + H(+)</text>
        <dbReference type="Rhea" id="RHEA:21644"/>
        <dbReference type="ChEBI" id="CHEBI:15378"/>
        <dbReference type="ChEBI" id="CHEBI:17754"/>
        <dbReference type="ChEBI" id="CHEBI:30616"/>
        <dbReference type="ChEBI" id="CHEBI:57597"/>
        <dbReference type="ChEBI" id="CHEBI:456216"/>
        <dbReference type="EC" id="2.7.1.30"/>
    </reaction>
</comment>
<comment type="activity regulation">
    <text evidence="1">Inhibited by fructose 1,6-bisphosphate (FBP).</text>
</comment>
<comment type="pathway">
    <text evidence="1">Polyol metabolism; glycerol degradation via glycerol kinase pathway; sn-glycerol 3-phosphate from glycerol: step 1/1.</text>
</comment>
<comment type="similarity">
    <text evidence="1">Belongs to the FGGY kinase family.</text>
</comment>
<reference key="1">
    <citation type="submission" date="2009-01" db="EMBL/GenBank/DDBJ databases">
        <title>Complete sequence of Chloroflexus sp. Y-400-fl.</title>
        <authorList>
            <consortium name="US DOE Joint Genome Institute"/>
            <person name="Lucas S."/>
            <person name="Copeland A."/>
            <person name="Lapidus A."/>
            <person name="Glavina del Rio T."/>
            <person name="Dalin E."/>
            <person name="Tice H."/>
            <person name="Bruce D."/>
            <person name="Goodwin L."/>
            <person name="Pitluck S."/>
            <person name="Sims D."/>
            <person name="Kiss H."/>
            <person name="Brettin T."/>
            <person name="Detter J.C."/>
            <person name="Han C."/>
            <person name="Larimer F."/>
            <person name="Land M."/>
            <person name="Hauser L."/>
            <person name="Kyrpides N."/>
            <person name="Ovchinnikova G."/>
            <person name="Bryant D.A."/>
            <person name="Richardson P."/>
        </authorList>
    </citation>
    <scope>NUCLEOTIDE SEQUENCE [LARGE SCALE GENOMIC DNA]</scope>
    <source>
        <strain>ATCC 29364 / DSM 637 / Y-400-fl</strain>
    </source>
</reference>
<accession>B9LD34</accession>
<gene>
    <name evidence="1" type="primary">glpK</name>
    <name type="ordered locus">Chy400_3552</name>
</gene>
<organism>
    <name type="scientific">Chloroflexus aurantiacus (strain ATCC 29364 / DSM 637 / Y-400-fl)</name>
    <dbReference type="NCBI Taxonomy" id="480224"/>
    <lineage>
        <taxon>Bacteria</taxon>
        <taxon>Bacillati</taxon>
        <taxon>Chloroflexota</taxon>
        <taxon>Chloroflexia</taxon>
        <taxon>Chloroflexales</taxon>
        <taxon>Chloroflexineae</taxon>
        <taxon>Chloroflexaceae</taxon>
        <taxon>Chloroflexus</taxon>
    </lineage>
</organism>
<dbReference type="EC" id="2.7.1.30" evidence="1"/>
<dbReference type="EMBL" id="CP001364">
    <property type="protein sequence ID" value="ACM54923.1"/>
    <property type="molecule type" value="Genomic_DNA"/>
</dbReference>
<dbReference type="SMR" id="B9LD34"/>
<dbReference type="KEGG" id="chl:Chy400_3552"/>
<dbReference type="HOGENOM" id="CLU_009281_2_3_0"/>
<dbReference type="OrthoDB" id="9805576at2"/>
<dbReference type="UniPathway" id="UPA00618">
    <property type="reaction ID" value="UER00672"/>
</dbReference>
<dbReference type="GO" id="GO:0005829">
    <property type="term" value="C:cytosol"/>
    <property type="evidence" value="ECO:0007669"/>
    <property type="project" value="TreeGrafter"/>
</dbReference>
<dbReference type="GO" id="GO:0005524">
    <property type="term" value="F:ATP binding"/>
    <property type="evidence" value="ECO:0007669"/>
    <property type="project" value="UniProtKB-UniRule"/>
</dbReference>
<dbReference type="GO" id="GO:0004370">
    <property type="term" value="F:glycerol kinase activity"/>
    <property type="evidence" value="ECO:0000250"/>
    <property type="project" value="UniProtKB"/>
</dbReference>
<dbReference type="GO" id="GO:0019563">
    <property type="term" value="P:glycerol catabolic process"/>
    <property type="evidence" value="ECO:0007669"/>
    <property type="project" value="UniProtKB-UniRule"/>
</dbReference>
<dbReference type="GO" id="GO:0006071">
    <property type="term" value="P:glycerol metabolic process"/>
    <property type="evidence" value="ECO:0000250"/>
    <property type="project" value="UniProtKB"/>
</dbReference>
<dbReference type="GO" id="GO:0006072">
    <property type="term" value="P:glycerol-3-phosphate metabolic process"/>
    <property type="evidence" value="ECO:0007669"/>
    <property type="project" value="InterPro"/>
</dbReference>
<dbReference type="CDD" id="cd07769">
    <property type="entry name" value="ASKHA_NBD_FGGY_GK"/>
    <property type="match status" value="1"/>
</dbReference>
<dbReference type="FunFam" id="3.30.420.40:FF:000007">
    <property type="entry name" value="Glycerol kinase"/>
    <property type="match status" value="1"/>
</dbReference>
<dbReference type="FunFam" id="3.30.420.40:FF:000008">
    <property type="entry name" value="Glycerol kinase"/>
    <property type="match status" value="1"/>
</dbReference>
<dbReference type="Gene3D" id="3.30.420.40">
    <property type="match status" value="2"/>
</dbReference>
<dbReference type="HAMAP" id="MF_00186">
    <property type="entry name" value="Glycerol_kin"/>
    <property type="match status" value="1"/>
</dbReference>
<dbReference type="InterPro" id="IPR043129">
    <property type="entry name" value="ATPase_NBD"/>
</dbReference>
<dbReference type="InterPro" id="IPR000577">
    <property type="entry name" value="Carb_kinase_FGGY"/>
</dbReference>
<dbReference type="InterPro" id="IPR018483">
    <property type="entry name" value="Carb_kinase_FGGY_CS"/>
</dbReference>
<dbReference type="InterPro" id="IPR018485">
    <property type="entry name" value="FGGY_C"/>
</dbReference>
<dbReference type="InterPro" id="IPR018484">
    <property type="entry name" value="FGGY_N"/>
</dbReference>
<dbReference type="InterPro" id="IPR005999">
    <property type="entry name" value="Glycerol_kin"/>
</dbReference>
<dbReference type="NCBIfam" id="TIGR01311">
    <property type="entry name" value="glycerol_kin"/>
    <property type="match status" value="1"/>
</dbReference>
<dbReference type="NCBIfam" id="NF000756">
    <property type="entry name" value="PRK00047.1"/>
    <property type="match status" value="1"/>
</dbReference>
<dbReference type="PANTHER" id="PTHR10196:SF69">
    <property type="entry name" value="GLYCEROL KINASE"/>
    <property type="match status" value="1"/>
</dbReference>
<dbReference type="PANTHER" id="PTHR10196">
    <property type="entry name" value="SUGAR KINASE"/>
    <property type="match status" value="1"/>
</dbReference>
<dbReference type="Pfam" id="PF02782">
    <property type="entry name" value="FGGY_C"/>
    <property type="match status" value="1"/>
</dbReference>
<dbReference type="Pfam" id="PF00370">
    <property type="entry name" value="FGGY_N"/>
    <property type="match status" value="1"/>
</dbReference>
<dbReference type="PIRSF" id="PIRSF000538">
    <property type="entry name" value="GlpK"/>
    <property type="match status" value="1"/>
</dbReference>
<dbReference type="SUPFAM" id="SSF53067">
    <property type="entry name" value="Actin-like ATPase domain"/>
    <property type="match status" value="2"/>
</dbReference>
<dbReference type="PROSITE" id="PS00933">
    <property type="entry name" value="FGGY_KINASES_1"/>
    <property type="match status" value="1"/>
</dbReference>
<dbReference type="PROSITE" id="PS00445">
    <property type="entry name" value="FGGY_KINASES_2"/>
    <property type="match status" value="1"/>
</dbReference>